<dbReference type="EMBL" id="CH476597">
    <property type="protein sequence ID" value="EAU36593.1"/>
    <property type="molecule type" value="Genomic_DNA"/>
</dbReference>
<dbReference type="RefSeq" id="XP_001212497.1">
    <property type="nucleotide sequence ID" value="XM_001212497.1"/>
</dbReference>
<dbReference type="EnsemblFungi" id="EAU36593">
    <property type="protein sequence ID" value="EAU36593"/>
    <property type="gene ID" value="ATEG_03319"/>
</dbReference>
<dbReference type="GeneID" id="4318086"/>
<dbReference type="VEuPathDB" id="FungiDB:ATEG_03319"/>
<dbReference type="eggNOG" id="ENOG502RXC5">
    <property type="taxonomic scope" value="Eukaryota"/>
</dbReference>
<dbReference type="HOGENOM" id="CLU_046558_0_0_1"/>
<dbReference type="OMA" id="QTRCVQI"/>
<dbReference type="OrthoDB" id="5295771at2759"/>
<dbReference type="Proteomes" id="UP000007963">
    <property type="component" value="Unassembled WGS sequence"/>
</dbReference>
<dbReference type="GO" id="GO:0005743">
    <property type="term" value="C:mitochondrial inner membrane"/>
    <property type="evidence" value="ECO:0007669"/>
    <property type="project" value="TreeGrafter"/>
</dbReference>
<dbReference type="GO" id="GO:0007007">
    <property type="term" value="P:inner mitochondrial membrane organization"/>
    <property type="evidence" value="ECO:0007669"/>
    <property type="project" value="TreeGrafter"/>
</dbReference>
<dbReference type="Gene3D" id="3.60.160.10">
    <property type="entry name" value="Mitochondrial biogenesis AIM24"/>
    <property type="match status" value="1"/>
</dbReference>
<dbReference type="InterPro" id="IPR002838">
    <property type="entry name" value="AIM24"/>
</dbReference>
<dbReference type="InterPro" id="IPR036983">
    <property type="entry name" value="AIM24_sf"/>
</dbReference>
<dbReference type="InterPro" id="IPR016031">
    <property type="entry name" value="Trp_RNA-bd_attenuator-like_dom"/>
</dbReference>
<dbReference type="PANTHER" id="PTHR36959">
    <property type="entry name" value="ALTERED INHERITANCE OF MITOCHONDRIA PROTEIN 24, MITOCHONDRIAL"/>
    <property type="match status" value="1"/>
</dbReference>
<dbReference type="PANTHER" id="PTHR36959:SF2">
    <property type="entry name" value="ALTERED INHERITANCE OF MITOCHONDRIA PROTEIN 24, MITOCHONDRIAL"/>
    <property type="match status" value="1"/>
</dbReference>
<dbReference type="Pfam" id="PF01987">
    <property type="entry name" value="AIM24"/>
    <property type="match status" value="1"/>
</dbReference>
<dbReference type="SUPFAM" id="SSF51219">
    <property type="entry name" value="TRAP-like"/>
    <property type="match status" value="1"/>
</dbReference>
<name>AIM24_ASPTN</name>
<gene>
    <name type="primary">aim24</name>
    <name type="ORF">ATEG_03319</name>
</gene>
<organism>
    <name type="scientific">Aspergillus terreus (strain NIH 2624 / FGSC A1156)</name>
    <dbReference type="NCBI Taxonomy" id="341663"/>
    <lineage>
        <taxon>Eukaryota</taxon>
        <taxon>Fungi</taxon>
        <taxon>Dikarya</taxon>
        <taxon>Ascomycota</taxon>
        <taxon>Pezizomycotina</taxon>
        <taxon>Eurotiomycetes</taxon>
        <taxon>Eurotiomycetidae</taxon>
        <taxon>Eurotiales</taxon>
        <taxon>Aspergillaceae</taxon>
        <taxon>Aspergillus</taxon>
        <taxon>Aspergillus subgen. Circumdati</taxon>
    </lineage>
</organism>
<evidence type="ECO:0000250" key="1"/>
<evidence type="ECO:0000255" key="2"/>
<evidence type="ECO:0000256" key="3">
    <source>
        <dbReference type="SAM" id="MobiDB-lite"/>
    </source>
</evidence>
<evidence type="ECO:0000305" key="4"/>
<proteinExistence type="inferred from homology"/>
<keyword id="KW-0496">Mitochondrion</keyword>
<keyword id="KW-1185">Reference proteome</keyword>
<keyword id="KW-0809">Transit peptide</keyword>
<accession>Q0CSL5</accession>
<protein>
    <recommendedName>
        <fullName>Altered inheritance of mitochondria protein 24, mitochondrial</fullName>
    </recommendedName>
</protein>
<reference key="1">
    <citation type="submission" date="2005-09" db="EMBL/GenBank/DDBJ databases">
        <title>Annotation of the Aspergillus terreus NIH2624 genome.</title>
        <authorList>
            <person name="Birren B.W."/>
            <person name="Lander E.S."/>
            <person name="Galagan J.E."/>
            <person name="Nusbaum C."/>
            <person name="Devon K."/>
            <person name="Henn M."/>
            <person name="Ma L.-J."/>
            <person name="Jaffe D.B."/>
            <person name="Butler J."/>
            <person name="Alvarez P."/>
            <person name="Gnerre S."/>
            <person name="Grabherr M."/>
            <person name="Kleber M."/>
            <person name="Mauceli E.W."/>
            <person name="Brockman W."/>
            <person name="Rounsley S."/>
            <person name="Young S.K."/>
            <person name="LaButti K."/>
            <person name="Pushparaj V."/>
            <person name="DeCaprio D."/>
            <person name="Crawford M."/>
            <person name="Koehrsen M."/>
            <person name="Engels R."/>
            <person name="Montgomery P."/>
            <person name="Pearson M."/>
            <person name="Howarth C."/>
            <person name="Larson L."/>
            <person name="Luoma S."/>
            <person name="White J."/>
            <person name="Alvarado L."/>
            <person name="Kodira C.D."/>
            <person name="Zeng Q."/>
            <person name="Oleary S."/>
            <person name="Yandava C."/>
            <person name="Denning D.W."/>
            <person name="Nierman W.C."/>
            <person name="Milne T."/>
            <person name="Madden K."/>
        </authorList>
    </citation>
    <scope>NUCLEOTIDE SEQUENCE [LARGE SCALE GENOMIC DNA]</scope>
    <source>
        <strain>NIH 2624 / FGSC A1156</strain>
    </source>
</reference>
<sequence>MSQPWRRGVRALSWTRVLPPRARQGLSASQTRCVQIRAAPAEQPASVNGDHLPVVATPNSAQSSDARFDVIGAPYSMLSVSLSASQNLYTRRGTLVGLSGKADNVSSASPVTALVSVRSPVTSFAVVHLNGSVDWMVAQRRALLAWTGRSLSIRPTINTSLSIAHWGSSEVTGRGLLALVGTGQLYSVELKAGEQYIVHPSNVVAYTMSSNPPRPYRFKSTTLKFQVPGLKSLPRFIQDSKFIQDMSDTDTWKGTMKLFHKIRTWSRMTIWGDRLFLQFDGPTTILLQTRGPRINEILTTHEVNEIADSPRGLTIGPRKPSEDKKTAEEALQPTPDAPSRSVDDLIQEVEGSAQRIATITKEGKVFFEKAGQKN</sequence>
<feature type="transit peptide" description="Mitochondrion" evidence="2">
    <location>
        <begin position="1"/>
        <end position="11"/>
    </location>
</feature>
<feature type="chain" id="PRO_0000399569" description="Altered inheritance of mitochondria protein 24, mitochondrial">
    <location>
        <begin position="12"/>
        <end position="374"/>
    </location>
</feature>
<feature type="region of interest" description="Disordered" evidence="3">
    <location>
        <begin position="308"/>
        <end position="342"/>
    </location>
</feature>
<feature type="compositionally biased region" description="Basic and acidic residues" evidence="3">
    <location>
        <begin position="319"/>
        <end position="328"/>
    </location>
</feature>
<comment type="subcellular location">
    <subcellularLocation>
        <location evidence="1">Mitochondrion</location>
    </subcellularLocation>
</comment>
<comment type="similarity">
    <text evidence="4">Belongs to the AIM24 family.</text>
</comment>